<protein>
    <recommendedName>
        <fullName evidence="1">2-C-methyl-D-erythritol 2,4-cyclodiphosphate synthase</fullName>
        <shortName evidence="1">MECDP-synthase</shortName>
        <shortName evidence="1">MECPP-synthase</shortName>
        <shortName evidence="1">MECPS</shortName>
        <ecNumber evidence="1">4.6.1.12</ecNumber>
    </recommendedName>
</protein>
<dbReference type="EC" id="4.6.1.12" evidence="1"/>
<dbReference type="EMBL" id="CP001344">
    <property type="protein sequence ID" value="ACL46297.1"/>
    <property type="molecule type" value="Genomic_DNA"/>
</dbReference>
<dbReference type="SMR" id="B8HVI5"/>
<dbReference type="STRING" id="395961.Cyan7425_3983"/>
<dbReference type="KEGG" id="cyn:Cyan7425_3983"/>
<dbReference type="eggNOG" id="COG0245">
    <property type="taxonomic scope" value="Bacteria"/>
</dbReference>
<dbReference type="HOGENOM" id="CLU_084630_2_0_3"/>
<dbReference type="OrthoDB" id="9804336at2"/>
<dbReference type="UniPathway" id="UPA00056">
    <property type="reaction ID" value="UER00095"/>
</dbReference>
<dbReference type="GO" id="GO:0008685">
    <property type="term" value="F:2-C-methyl-D-erythritol 2,4-cyclodiphosphate synthase activity"/>
    <property type="evidence" value="ECO:0007669"/>
    <property type="project" value="UniProtKB-UniRule"/>
</dbReference>
<dbReference type="GO" id="GO:0046872">
    <property type="term" value="F:metal ion binding"/>
    <property type="evidence" value="ECO:0007669"/>
    <property type="project" value="UniProtKB-KW"/>
</dbReference>
<dbReference type="GO" id="GO:0019288">
    <property type="term" value="P:isopentenyl diphosphate biosynthetic process, methylerythritol 4-phosphate pathway"/>
    <property type="evidence" value="ECO:0007669"/>
    <property type="project" value="UniProtKB-UniRule"/>
</dbReference>
<dbReference type="GO" id="GO:0016114">
    <property type="term" value="P:terpenoid biosynthetic process"/>
    <property type="evidence" value="ECO:0007669"/>
    <property type="project" value="InterPro"/>
</dbReference>
<dbReference type="CDD" id="cd00554">
    <property type="entry name" value="MECDP_synthase"/>
    <property type="match status" value="1"/>
</dbReference>
<dbReference type="FunFam" id="3.30.1330.50:FF:000001">
    <property type="entry name" value="2-C-methyl-D-erythritol 2,4-cyclodiphosphate synthase"/>
    <property type="match status" value="1"/>
</dbReference>
<dbReference type="Gene3D" id="3.30.1330.50">
    <property type="entry name" value="2-C-methyl-D-erythritol 2,4-cyclodiphosphate synthase"/>
    <property type="match status" value="1"/>
</dbReference>
<dbReference type="HAMAP" id="MF_00107">
    <property type="entry name" value="IspF"/>
    <property type="match status" value="1"/>
</dbReference>
<dbReference type="InterPro" id="IPR003526">
    <property type="entry name" value="MECDP_synthase"/>
</dbReference>
<dbReference type="InterPro" id="IPR020555">
    <property type="entry name" value="MECDP_synthase_CS"/>
</dbReference>
<dbReference type="InterPro" id="IPR036571">
    <property type="entry name" value="MECDP_synthase_sf"/>
</dbReference>
<dbReference type="NCBIfam" id="TIGR00151">
    <property type="entry name" value="ispF"/>
    <property type="match status" value="1"/>
</dbReference>
<dbReference type="PANTHER" id="PTHR43181">
    <property type="entry name" value="2-C-METHYL-D-ERYTHRITOL 2,4-CYCLODIPHOSPHATE SYNTHASE, CHLOROPLASTIC"/>
    <property type="match status" value="1"/>
</dbReference>
<dbReference type="PANTHER" id="PTHR43181:SF1">
    <property type="entry name" value="2-C-METHYL-D-ERYTHRITOL 2,4-CYCLODIPHOSPHATE SYNTHASE, CHLOROPLASTIC"/>
    <property type="match status" value="1"/>
</dbReference>
<dbReference type="Pfam" id="PF02542">
    <property type="entry name" value="YgbB"/>
    <property type="match status" value="1"/>
</dbReference>
<dbReference type="SUPFAM" id="SSF69765">
    <property type="entry name" value="IpsF-like"/>
    <property type="match status" value="1"/>
</dbReference>
<dbReference type="PROSITE" id="PS01350">
    <property type="entry name" value="ISPF"/>
    <property type="match status" value="1"/>
</dbReference>
<proteinExistence type="inferred from homology"/>
<keyword id="KW-0414">Isoprene biosynthesis</keyword>
<keyword id="KW-0456">Lyase</keyword>
<keyword id="KW-0479">Metal-binding</keyword>
<evidence type="ECO:0000255" key="1">
    <source>
        <dbReference type="HAMAP-Rule" id="MF_00107"/>
    </source>
</evidence>
<gene>
    <name evidence="1" type="primary">ispF</name>
    <name type="ordered locus">Cyan7425_3983</name>
</gene>
<accession>B8HVI5</accession>
<feature type="chain" id="PRO_1000190705" description="2-C-methyl-D-erythritol 2,4-cyclodiphosphate synthase">
    <location>
        <begin position="1"/>
        <end position="161"/>
    </location>
</feature>
<feature type="binding site" evidence="1">
    <location>
        <begin position="11"/>
        <end position="13"/>
    </location>
    <ligand>
        <name>4-CDP-2-C-methyl-D-erythritol 2-phosphate</name>
        <dbReference type="ChEBI" id="CHEBI:57919"/>
    </ligand>
</feature>
<feature type="binding site" evidence="1">
    <location>
        <position position="11"/>
    </location>
    <ligand>
        <name>a divalent metal cation</name>
        <dbReference type="ChEBI" id="CHEBI:60240"/>
    </ligand>
</feature>
<feature type="binding site" evidence="1">
    <location>
        <position position="13"/>
    </location>
    <ligand>
        <name>a divalent metal cation</name>
        <dbReference type="ChEBI" id="CHEBI:60240"/>
    </ligand>
</feature>
<feature type="binding site" evidence="1">
    <location>
        <begin position="37"/>
        <end position="38"/>
    </location>
    <ligand>
        <name>4-CDP-2-C-methyl-D-erythritol 2-phosphate</name>
        <dbReference type="ChEBI" id="CHEBI:57919"/>
    </ligand>
</feature>
<feature type="binding site" evidence="1">
    <location>
        <position position="45"/>
    </location>
    <ligand>
        <name>a divalent metal cation</name>
        <dbReference type="ChEBI" id="CHEBI:60240"/>
    </ligand>
</feature>
<feature type="binding site" evidence="1">
    <location>
        <begin position="59"/>
        <end position="61"/>
    </location>
    <ligand>
        <name>4-CDP-2-C-methyl-D-erythritol 2-phosphate</name>
        <dbReference type="ChEBI" id="CHEBI:57919"/>
    </ligand>
</feature>
<feature type="binding site" evidence="1">
    <location>
        <begin position="135"/>
        <end position="138"/>
    </location>
    <ligand>
        <name>4-CDP-2-C-methyl-D-erythritol 2-phosphate</name>
        <dbReference type="ChEBI" id="CHEBI:57919"/>
    </ligand>
</feature>
<feature type="binding site" evidence="1">
    <location>
        <position position="145"/>
    </location>
    <ligand>
        <name>4-CDP-2-C-methyl-D-erythritol 2-phosphate</name>
        <dbReference type="ChEBI" id="CHEBI:57919"/>
    </ligand>
</feature>
<feature type="site" description="Transition state stabilizer" evidence="1">
    <location>
        <position position="37"/>
    </location>
</feature>
<feature type="site" description="Transition state stabilizer" evidence="1">
    <location>
        <position position="136"/>
    </location>
</feature>
<organism>
    <name type="scientific">Cyanothece sp. (strain PCC 7425 / ATCC 29141)</name>
    <dbReference type="NCBI Taxonomy" id="395961"/>
    <lineage>
        <taxon>Bacteria</taxon>
        <taxon>Bacillati</taxon>
        <taxon>Cyanobacteriota</taxon>
        <taxon>Cyanophyceae</taxon>
        <taxon>Gomontiellales</taxon>
        <taxon>Cyanothecaceae</taxon>
        <taxon>Cyanothece</taxon>
    </lineage>
</organism>
<name>ISPF_CYAP4</name>
<comment type="function">
    <text evidence="1">Involved in the biosynthesis of isopentenyl diphosphate (IPP) and dimethylallyl diphosphate (DMAPP), two major building blocks of isoprenoid compounds. Catalyzes the conversion of 4-diphosphocytidyl-2-C-methyl-D-erythritol 2-phosphate (CDP-ME2P) to 2-C-methyl-D-erythritol 2,4-cyclodiphosphate (ME-CPP) with a corresponding release of cytidine 5-monophosphate (CMP).</text>
</comment>
<comment type="catalytic activity">
    <reaction evidence="1">
        <text>4-CDP-2-C-methyl-D-erythritol 2-phosphate = 2-C-methyl-D-erythritol 2,4-cyclic diphosphate + CMP</text>
        <dbReference type="Rhea" id="RHEA:23864"/>
        <dbReference type="ChEBI" id="CHEBI:57919"/>
        <dbReference type="ChEBI" id="CHEBI:58483"/>
        <dbReference type="ChEBI" id="CHEBI:60377"/>
        <dbReference type="EC" id="4.6.1.12"/>
    </reaction>
</comment>
<comment type="cofactor">
    <cofactor evidence="1">
        <name>a divalent metal cation</name>
        <dbReference type="ChEBI" id="CHEBI:60240"/>
    </cofactor>
    <text evidence="1">Binds 1 divalent metal cation per subunit.</text>
</comment>
<comment type="pathway">
    <text evidence="1">Isoprenoid biosynthesis; isopentenyl diphosphate biosynthesis via DXP pathway; isopentenyl diphosphate from 1-deoxy-D-xylulose 5-phosphate: step 4/6.</text>
</comment>
<comment type="subunit">
    <text evidence="1">Homotrimer.</text>
</comment>
<comment type="similarity">
    <text evidence="1">Belongs to the IspF family.</text>
</comment>
<sequence length="161" mass="17230">MTSIRIGNGYDIHRLVSDRPLILGGVNIPHELGLLGHSDADVLTHAIMDALLGALSLGDIGHYFPPGDPQWAGADSLKLLAQVHQLVQERGWQVGNIDSVIVAERPKLKPHLAAMRDRLSAVLKVKPDQIGIKATTNEKLGPEGREEGICAYAVAVLVSVA</sequence>
<reference key="1">
    <citation type="journal article" date="2011" name="MBio">
        <title>Novel metabolic attributes of the genus Cyanothece, comprising a group of unicellular nitrogen-fixing Cyanobacteria.</title>
        <authorList>
            <person name="Bandyopadhyay A."/>
            <person name="Elvitigala T."/>
            <person name="Welsh E."/>
            <person name="Stockel J."/>
            <person name="Liberton M."/>
            <person name="Min H."/>
            <person name="Sherman L.A."/>
            <person name="Pakrasi H.B."/>
        </authorList>
    </citation>
    <scope>NUCLEOTIDE SEQUENCE [LARGE SCALE GENOMIC DNA]</scope>
    <source>
        <strain>PCC 7425 / ATCC 29141</strain>
    </source>
</reference>